<comment type="function">
    <text evidence="1">Involved in the regulation of the intracellular balance of NAD and NADP, and is a key enzyme in the biosynthesis of NADP. Catalyzes specifically the phosphorylation on 2'-hydroxyl of the adenosine moiety of NAD to yield NADP.</text>
</comment>
<comment type="catalytic activity">
    <reaction evidence="1">
        <text>NAD(+) + ATP = ADP + NADP(+) + H(+)</text>
        <dbReference type="Rhea" id="RHEA:18629"/>
        <dbReference type="ChEBI" id="CHEBI:15378"/>
        <dbReference type="ChEBI" id="CHEBI:30616"/>
        <dbReference type="ChEBI" id="CHEBI:57540"/>
        <dbReference type="ChEBI" id="CHEBI:58349"/>
        <dbReference type="ChEBI" id="CHEBI:456216"/>
        <dbReference type="EC" id="2.7.1.23"/>
    </reaction>
</comment>
<comment type="cofactor">
    <cofactor evidence="1">
        <name>a divalent metal cation</name>
        <dbReference type="ChEBI" id="CHEBI:60240"/>
    </cofactor>
</comment>
<comment type="subcellular location">
    <subcellularLocation>
        <location evidence="1">Cytoplasm</location>
    </subcellularLocation>
</comment>
<comment type="similarity">
    <text evidence="1">Belongs to the NAD kinase family.</text>
</comment>
<feature type="chain" id="PRO_1000079484" description="NAD kinase">
    <location>
        <begin position="1"/>
        <end position="285"/>
    </location>
</feature>
<feature type="active site" description="Proton acceptor" evidence="1">
    <location>
        <position position="64"/>
    </location>
</feature>
<feature type="binding site" evidence="1">
    <location>
        <begin position="64"/>
        <end position="65"/>
    </location>
    <ligand>
        <name>NAD(+)</name>
        <dbReference type="ChEBI" id="CHEBI:57540"/>
    </ligand>
</feature>
<feature type="binding site" evidence="1">
    <location>
        <begin position="140"/>
        <end position="141"/>
    </location>
    <ligand>
        <name>NAD(+)</name>
        <dbReference type="ChEBI" id="CHEBI:57540"/>
    </ligand>
</feature>
<feature type="binding site" evidence="1">
    <location>
        <position position="151"/>
    </location>
    <ligand>
        <name>NAD(+)</name>
        <dbReference type="ChEBI" id="CHEBI:57540"/>
    </ligand>
</feature>
<feature type="binding site" evidence="1">
    <location>
        <position position="168"/>
    </location>
    <ligand>
        <name>NAD(+)</name>
        <dbReference type="ChEBI" id="CHEBI:57540"/>
    </ligand>
</feature>
<feature type="binding site" evidence="1">
    <location>
        <position position="170"/>
    </location>
    <ligand>
        <name>NAD(+)</name>
        <dbReference type="ChEBI" id="CHEBI:57540"/>
    </ligand>
</feature>
<feature type="binding site" evidence="1">
    <location>
        <begin position="181"/>
        <end position="186"/>
    </location>
    <ligand>
        <name>NAD(+)</name>
        <dbReference type="ChEBI" id="CHEBI:57540"/>
    </ligand>
</feature>
<protein>
    <recommendedName>
        <fullName evidence="1">NAD kinase</fullName>
        <ecNumber evidence="1">2.7.1.23</ecNumber>
    </recommendedName>
    <alternativeName>
        <fullName evidence="1">ATP-dependent NAD kinase</fullName>
    </alternativeName>
</protein>
<organism>
    <name type="scientific">Lachnoclostridium phytofermentans (strain ATCC 700394 / DSM 18823 / ISDg)</name>
    <name type="common">Clostridium phytofermentans</name>
    <dbReference type="NCBI Taxonomy" id="357809"/>
    <lineage>
        <taxon>Bacteria</taxon>
        <taxon>Bacillati</taxon>
        <taxon>Bacillota</taxon>
        <taxon>Clostridia</taxon>
        <taxon>Lachnospirales</taxon>
        <taxon>Lachnospiraceae</taxon>
    </lineage>
</organism>
<sequence>MKKFCIIANRDKDENLTITQTMLEFLEANGKTVYVTEESCLEGSYTDVSGIPKDVECAIVLGGDGTILQAAHDLLQLDIPILGVNLGTLGFLAEIETLTMKQAFSKLFLNQYNIESRMMIDATVFKEGQSLSSHKVSAINDVVITRSGFSRIIGVSIFINGEVVQNYRGDGVIISTPTGSTGYNLSAGGPIVTPKAEMIMITPICPHSLNARSIIVTSDDTVEIQIRESKKTQEEEAIVTVDGSFSMELQANDRILIKKAKERVKLVRLEGHSFFHLLRTKFGDK</sequence>
<proteinExistence type="inferred from homology"/>
<evidence type="ECO:0000255" key="1">
    <source>
        <dbReference type="HAMAP-Rule" id="MF_00361"/>
    </source>
</evidence>
<reference key="1">
    <citation type="submission" date="2007-11" db="EMBL/GenBank/DDBJ databases">
        <title>Complete genome sequence of Clostridium phytofermentans ISDg.</title>
        <authorList>
            <person name="Leschine S.B."/>
            <person name="Warnick T.A."/>
            <person name="Blanchard J.L."/>
            <person name="Schnell D.J."/>
            <person name="Petit E.L."/>
            <person name="LaTouf W.G."/>
            <person name="Copeland A."/>
            <person name="Lucas S."/>
            <person name="Lapidus A."/>
            <person name="Barry K."/>
            <person name="Glavina del Rio T."/>
            <person name="Dalin E."/>
            <person name="Tice H."/>
            <person name="Pitluck S."/>
            <person name="Kiss H."/>
            <person name="Brettin T."/>
            <person name="Bruce D."/>
            <person name="Detter J.C."/>
            <person name="Han C."/>
            <person name="Kuske C."/>
            <person name="Schmutz J."/>
            <person name="Larimer F."/>
            <person name="Land M."/>
            <person name="Hauser L."/>
            <person name="Kyrpides N."/>
            <person name="Kim E.A."/>
            <person name="Richardson P."/>
        </authorList>
    </citation>
    <scope>NUCLEOTIDE SEQUENCE [LARGE SCALE GENOMIC DNA]</scope>
    <source>
        <strain>ATCC 700394 / DSM 18823 / ISDg</strain>
    </source>
</reference>
<gene>
    <name evidence="1" type="primary">nadK</name>
    <name type="ordered locus">Cphy_2509</name>
</gene>
<accession>A9KMB6</accession>
<name>NADK_LACP7</name>
<keyword id="KW-0067">ATP-binding</keyword>
<keyword id="KW-0963">Cytoplasm</keyword>
<keyword id="KW-0418">Kinase</keyword>
<keyword id="KW-0520">NAD</keyword>
<keyword id="KW-0521">NADP</keyword>
<keyword id="KW-0547">Nucleotide-binding</keyword>
<keyword id="KW-1185">Reference proteome</keyword>
<keyword id="KW-0808">Transferase</keyword>
<dbReference type="EC" id="2.7.1.23" evidence="1"/>
<dbReference type="EMBL" id="CP000885">
    <property type="protein sequence ID" value="ABX42870.1"/>
    <property type="molecule type" value="Genomic_DNA"/>
</dbReference>
<dbReference type="RefSeq" id="WP_012200523.1">
    <property type="nucleotide sequence ID" value="NC_010001.1"/>
</dbReference>
<dbReference type="SMR" id="A9KMB6"/>
<dbReference type="STRING" id="357809.Cphy_2509"/>
<dbReference type="KEGG" id="cpy:Cphy_2509"/>
<dbReference type="eggNOG" id="COG0061">
    <property type="taxonomic scope" value="Bacteria"/>
</dbReference>
<dbReference type="HOGENOM" id="CLU_008831_0_0_9"/>
<dbReference type="OrthoDB" id="9774737at2"/>
<dbReference type="Proteomes" id="UP000000370">
    <property type="component" value="Chromosome"/>
</dbReference>
<dbReference type="GO" id="GO:0005737">
    <property type="term" value="C:cytoplasm"/>
    <property type="evidence" value="ECO:0007669"/>
    <property type="project" value="UniProtKB-SubCell"/>
</dbReference>
<dbReference type="GO" id="GO:0005524">
    <property type="term" value="F:ATP binding"/>
    <property type="evidence" value="ECO:0007669"/>
    <property type="project" value="UniProtKB-KW"/>
</dbReference>
<dbReference type="GO" id="GO:0046872">
    <property type="term" value="F:metal ion binding"/>
    <property type="evidence" value="ECO:0007669"/>
    <property type="project" value="UniProtKB-UniRule"/>
</dbReference>
<dbReference type="GO" id="GO:0051287">
    <property type="term" value="F:NAD binding"/>
    <property type="evidence" value="ECO:0007669"/>
    <property type="project" value="UniProtKB-ARBA"/>
</dbReference>
<dbReference type="GO" id="GO:0003951">
    <property type="term" value="F:NAD+ kinase activity"/>
    <property type="evidence" value="ECO:0007669"/>
    <property type="project" value="UniProtKB-UniRule"/>
</dbReference>
<dbReference type="GO" id="GO:0019674">
    <property type="term" value="P:NAD metabolic process"/>
    <property type="evidence" value="ECO:0007669"/>
    <property type="project" value="InterPro"/>
</dbReference>
<dbReference type="GO" id="GO:0006741">
    <property type="term" value="P:NADP biosynthetic process"/>
    <property type="evidence" value="ECO:0007669"/>
    <property type="project" value="UniProtKB-UniRule"/>
</dbReference>
<dbReference type="Gene3D" id="3.40.50.10330">
    <property type="entry name" value="Probable inorganic polyphosphate/atp-NAD kinase, domain 1"/>
    <property type="match status" value="1"/>
</dbReference>
<dbReference type="Gene3D" id="2.60.200.30">
    <property type="entry name" value="Probable inorganic polyphosphate/atp-NAD kinase, domain 2"/>
    <property type="match status" value="1"/>
</dbReference>
<dbReference type="HAMAP" id="MF_00361">
    <property type="entry name" value="NAD_kinase"/>
    <property type="match status" value="1"/>
</dbReference>
<dbReference type="InterPro" id="IPR017438">
    <property type="entry name" value="ATP-NAD_kinase_N"/>
</dbReference>
<dbReference type="InterPro" id="IPR017437">
    <property type="entry name" value="ATP-NAD_kinase_PpnK-typ_C"/>
</dbReference>
<dbReference type="InterPro" id="IPR016064">
    <property type="entry name" value="NAD/diacylglycerol_kinase_sf"/>
</dbReference>
<dbReference type="InterPro" id="IPR002504">
    <property type="entry name" value="NADK"/>
</dbReference>
<dbReference type="PANTHER" id="PTHR20275">
    <property type="entry name" value="NAD KINASE"/>
    <property type="match status" value="1"/>
</dbReference>
<dbReference type="PANTHER" id="PTHR20275:SF0">
    <property type="entry name" value="NAD KINASE"/>
    <property type="match status" value="1"/>
</dbReference>
<dbReference type="Pfam" id="PF01513">
    <property type="entry name" value="NAD_kinase"/>
    <property type="match status" value="1"/>
</dbReference>
<dbReference type="Pfam" id="PF20143">
    <property type="entry name" value="NAD_kinase_C"/>
    <property type="match status" value="1"/>
</dbReference>
<dbReference type="SUPFAM" id="SSF111331">
    <property type="entry name" value="NAD kinase/diacylglycerol kinase-like"/>
    <property type="match status" value="1"/>
</dbReference>